<dbReference type="PIR" id="A01726">
    <property type="entry name" value="H3NJ2C"/>
</dbReference>
<dbReference type="SMR" id="P01463"/>
<dbReference type="GO" id="GO:0005576">
    <property type="term" value="C:extracellular region"/>
    <property type="evidence" value="ECO:0007669"/>
    <property type="project" value="UniProtKB-SubCell"/>
</dbReference>
<dbReference type="GO" id="GO:0016020">
    <property type="term" value="C:membrane"/>
    <property type="evidence" value="ECO:0007669"/>
    <property type="project" value="UniProtKB-KW"/>
</dbReference>
<dbReference type="GO" id="GO:0044218">
    <property type="term" value="C:other organism cell membrane"/>
    <property type="evidence" value="ECO:0007669"/>
    <property type="project" value="UniProtKB-KW"/>
</dbReference>
<dbReference type="GO" id="GO:0090729">
    <property type="term" value="F:toxin activity"/>
    <property type="evidence" value="ECO:0007669"/>
    <property type="project" value="UniProtKB-KW"/>
</dbReference>
<dbReference type="GO" id="GO:0031640">
    <property type="term" value="P:killing of cells of another organism"/>
    <property type="evidence" value="ECO:0007669"/>
    <property type="project" value="UniProtKB-KW"/>
</dbReference>
<dbReference type="CDD" id="cd00206">
    <property type="entry name" value="TFP_snake_toxin"/>
    <property type="match status" value="1"/>
</dbReference>
<dbReference type="FunFam" id="2.10.60.10:FF:000024">
    <property type="entry name" value="Cytotoxin 1"/>
    <property type="match status" value="1"/>
</dbReference>
<dbReference type="Gene3D" id="2.10.60.10">
    <property type="entry name" value="CD59"/>
    <property type="match status" value="1"/>
</dbReference>
<dbReference type="InterPro" id="IPR003572">
    <property type="entry name" value="Cytotoxin_Cobra"/>
</dbReference>
<dbReference type="InterPro" id="IPR003571">
    <property type="entry name" value="Snake_3FTx"/>
</dbReference>
<dbReference type="InterPro" id="IPR045860">
    <property type="entry name" value="Snake_toxin-like_sf"/>
</dbReference>
<dbReference type="InterPro" id="IPR018354">
    <property type="entry name" value="Snake_toxin_con_site"/>
</dbReference>
<dbReference type="InterPro" id="IPR054131">
    <property type="entry name" value="Toxin_cobra-type"/>
</dbReference>
<dbReference type="Pfam" id="PF21947">
    <property type="entry name" value="Toxin_cobra-type"/>
    <property type="match status" value="1"/>
</dbReference>
<dbReference type="PRINTS" id="PR00282">
    <property type="entry name" value="CYTOTOXIN"/>
</dbReference>
<dbReference type="SUPFAM" id="SSF57302">
    <property type="entry name" value="Snake toxin-like"/>
    <property type="match status" value="1"/>
</dbReference>
<dbReference type="PROSITE" id="PS00272">
    <property type="entry name" value="SNAKE_TOXIN"/>
    <property type="match status" value="1"/>
</dbReference>
<keyword id="KW-0123">Cardiotoxin</keyword>
<keyword id="KW-0204">Cytolysis</keyword>
<keyword id="KW-0903">Direct protein sequencing</keyword>
<keyword id="KW-1015">Disulfide bond</keyword>
<keyword id="KW-0472">Membrane</keyword>
<keyword id="KW-0964">Secreted</keyword>
<keyword id="KW-1052">Target cell membrane</keyword>
<keyword id="KW-1053">Target membrane</keyword>
<keyword id="KW-0800">Toxin</keyword>
<evidence type="ECO:0000250" key="1">
    <source>
        <dbReference type="UniProtKB" id="P60301"/>
    </source>
</evidence>
<evidence type="ECO:0000250" key="2">
    <source>
        <dbReference type="UniProtKB" id="P60304"/>
    </source>
</evidence>
<evidence type="ECO:0000269" key="3">
    <source>
    </source>
</evidence>
<evidence type="ECO:0000305" key="4"/>
<accession>P01463</accession>
<comment type="function">
    <text evidence="1 2">Shows cytolytic activity on many different cells by forming pore in lipid membranes. In vivo, increases heart rate or kills the animal by cardiac arrest. In addition, it binds to heparin with high affinity, interacts with Kv channel-interacting protein 1 (KCNIP1) in a calcium-independent manner, and binds to integrin alpha-V/beta-3 (ITGAV/ITGB3) with moderate affinity.</text>
</comment>
<comment type="subunit">
    <text evidence="1">Monomer in solution; Homodimer and oligomer in the presence of negatively charged lipids forming a pore with a size ranging between 20 and 30 Angstroms.</text>
</comment>
<comment type="subcellular location">
    <subcellularLocation>
        <location evidence="3">Secreted</location>
    </subcellularLocation>
    <subcellularLocation>
        <location evidence="1">Target cell membrane</location>
    </subcellularLocation>
</comment>
<comment type="tissue specificity">
    <text evidence="4">Expressed by the venom gland.</text>
</comment>
<comment type="toxic dose">
    <text evidence="3">LD(50) is 1.5 mg/kg by subcutaneous injection into mice.</text>
</comment>
<comment type="miscellaneous">
    <text evidence="3">Shows very weak hemolytic activity.</text>
</comment>
<comment type="miscellaneous">
    <text evidence="4">Is classified as a P-type cytotoxin, since a proline residue stands at position 30 (Pro-31 in standard classification).</text>
</comment>
<comment type="similarity">
    <text evidence="4">Belongs to the three-finger toxin family. Short-chain subfamily. Type IA cytotoxin sub-subfamily.</text>
</comment>
<name>3SA2_NAJNI</name>
<proteinExistence type="evidence at protein level"/>
<feature type="chain" id="PRO_0000093514" description="Cytotoxin 2" evidence="3">
    <location>
        <begin position="1"/>
        <end position="60"/>
    </location>
</feature>
<feature type="disulfide bond" evidence="1">
    <location>
        <begin position="3"/>
        <end position="21"/>
    </location>
</feature>
<feature type="disulfide bond" evidence="1">
    <location>
        <begin position="14"/>
        <end position="38"/>
    </location>
</feature>
<feature type="disulfide bond" evidence="1">
    <location>
        <begin position="42"/>
        <end position="53"/>
    </location>
</feature>
<feature type="disulfide bond" evidence="1">
    <location>
        <begin position="54"/>
        <end position="59"/>
    </location>
</feature>
<organism>
    <name type="scientific">Naja nivea</name>
    <name type="common">Cape cobra</name>
    <name type="synonym">Coluber niveus</name>
    <dbReference type="NCBI Taxonomy" id="8655"/>
    <lineage>
        <taxon>Eukaryota</taxon>
        <taxon>Metazoa</taxon>
        <taxon>Chordata</taxon>
        <taxon>Craniata</taxon>
        <taxon>Vertebrata</taxon>
        <taxon>Euteleostomi</taxon>
        <taxon>Lepidosauria</taxon>
        <taxon>Squamata</taxon>
        <taxon>Bifurcata</taxon>
        <taxon>Unidentata</taxon>
        <taxon>Episquamata</taxon>
        <taxon>Toxicofera</taxon>
        <taxon>Serpentes</taxon>
        <taxon>Colubroidea</taxon>
        <taxon>Elapidae</taxon>
        <taxon>Elapinae</taxon>
        <taxon>Naja</taxon>
    </lineage>
</organism>
<protein>
    <recommendedName>
        <fullName>Cytotoxin 2</fullName>
    </recommendedName>
    <alternativeName>
        <fullName>Toxin V(II)2</fullName>
    </alternativeName>
</protein>
<sequence length="60" mass="6871">LKCHQLIPPFWKTCPEGKNLCYKMYMVATPMIPVKRGCIDVCPKNSALVKYMCCNTDKCN</sequence>
<reference key="1">
    <citation type="journal article" date="1976" name="Biochim. Biophys. Acta">
        <title>The amino acid sequence of three non-curarimimetictoxins from Naja nivea venom.</title>
        <authorList>
            <person name="Botes D.P."/>
            <person name="Viljoen C.C."/>
        </authorList>
    </citation>
    <scope>PROTEIN SEQUENCE</scope>
    <scope>TOXIC DOSE</scope>
    <scope>SUBCELLULAR LOCATION</scope>
    <source>
        <tissue>Venom</tissue>
    </source>
</reference>